<keyword id="KW-0349">Heme</keyword>
<keyword id="KW-0376">Hydrogen peroxide</keyword>
<keyword id="KW-0408">Iron</keyword>
<keyword id="KW-0479">Metal-binding</keyword>
<keyword id="KW-0560">Oxidoreductase</keyword>
<keyword id="KW-0575">Peroxidase</keyword>
<evidence type="ECO:0000255" key="1">
    <source>
        <dbReference type="HAMAP-Rule" id="MF_01961"/>
    </source>
</evidence>
<evidence type="ECO:0000256" key="2">
    <source>
        <dbReference type="SAM" id="MobiDB-lite"/>
    </source>
</evidence>
<proteinExistence type="inferred from homology"/>
<accession>Q0SY48</accession>
<name>KATG_SHIF8</name>
<dbReference type="EC" id="1.11.1.21" evidence="1"/>
<dbReference type="EMBL" id="CP000266">
    <property type="protein sequence ID" value="ABF06017.1"/>
    <property type="molecule type" value="Genomic_DNA"/>
</dbReference>
<dbReference type="RefSeq" id="WP_001297636.1">
    <property type="nucleotide sequence ID" value="NC_008258.1"/>
</dbReference>
<dbReference type="SMR" id="Q0SY48"/>
<dbReference type="GeneID" id="75203227"/>
<dbReference type="KEGG" id="sfv:SFV_4012"/>
<dbReference type="HOGENOM" id="CLU_025424_2_0_6"/>
<dbReference type="Proteomes" id="UP000000659">
    <property type="component" value="Chromosome"/>
</dbReference>
<dbReference type="GO" id="GO:0005829">
    <property type="term" value="C:cytosol"/>
    <property type="evidence" value="ECO:0007669"/>
    <property type="project" value="TreeGrafter"/>
</dbReference>
<dbReference type="GO" id="GO:0004096">
    <property type="term" value="F:catalase activity"/>
    <property type="evidence" value="ECO:0007669"/>
    <property type="project" value="UniProtKB-UniRule"/>
</dbReference>
<dbReference type="GO" id="GO:0020037">
    <property type="term" value="F:heme binding"/>
    <property type="evidence" value="ECO:0007669"/>
    <property type="project" value="InterPro"/>
</dbReference>
<dbReference type="GO" id="GO:0046872">
    <property type="term" value="F:metal ion binding"/>
    <property type="evidence" value="ECO:0007669"/>
    <property type="project" value="UniProtKB-KW"/>
</dbReference>
<dbReference type="GO" id="GO:0070301">
    <property type="term" value="P:cellular response to hydrogen peroxide"/>
    <property type="evidence" value="ECO:0007669"/>
    <property type="project" value="TreeGrafter"/>
</dbReference>
<dbReference type="GO" id="GO:0042744">
    <property type="term" value="P:hydrogen peroxide catabolic process"/>
    <property type="evidence" value="ECO:0007669"/>
    <property type="project" value="UniProtKB-KW"/>
</dbReference>
<dbReference type="CDD" id="cd08200">
    <property type="entry name" value="catalase_peroxidase_2"/>
    <property type="match status" value="1"/>
</dbReference>
<dbReference type="FunFam" id="1.10.420.10:FF:000002">
    <property type="entry name" value="Catalase-peroxidase"/>
    <property type="match status" value="1"/>
</dbReference>
<dbReference type="FunFam" id="1.10.420.10:FF:000004">
    <property type="entry name" value="Catalase-peroxidase"/>
    <property type="match status" value="1"/>
</dbReference>
<dbReference type="FunFam" id="1.10.520.10:FF:000002">
    <property type="entry name" value="Catalase-peroxidase"/>
    <property type="match status" value="1"/>
</dbReference>
<dbReference type="Gene3D" id="1.10.520.10">
    <property type="match status" value="2"/>
</dbReference>
<dbReference type="Gene3D" id="1.10.420.10">
    <property type="entry name" value="Peroxidase, domain 2"/>
    <property type="match status" value="2"/>
</dbReference>
<dbReference type="HAMAP" id="MF_01961">
    <property type="entry name" value="Catal_peroxid"/>
    <property type="match status" value="1"/>
</dbReference>
<dbReference type="InterPro" id="IPR000763">
    <property type="entry name" value="Catalase_peroxidase"/>
</dbReference>
<dbReference type="InterPro" id="IPR002016">
    <property type="entry name" value="Haem_peroxidase"/>
</dbReference>
<dbReference type="InterPro" id="IPR010255">
    <property type="entry name" value="Haem_peroxidase_sf"/>
</dbReference>
<dbReference type="InterPro" id="IPR019794">
    <property type="entry name" value="Peroxidases_AS"/>
</dbReference>
<dbReference type="InterPro" id="IPR019793">
    <property type="entry name" value="Peroxidases_heam-ligand_BS"/>
</dbReference>
<dbReference type="NCBIfam" id="TIGR00198">
    <property type="entry name" value="cat_per_HPI"/>
    <property type="match status" value="1"/>
</dbReference>
<dbReference type="NCBIfam" id="NF011635">
    <property type="entry name" value="PRK15061.1"/>
    <property type="match status" value="1"/>
</dbReference>
<dbReference type="PANTHER" id="PTHR30555:SF0">
    <property type="entry name" value="CATALASE-PEROXIDASE"/>
    <property type="match status" value="1"/>
</dbReference>
<dbReference type="PANTHER" id="PTHR30555">
    <property type="entry name" value="HYDROPEROXIDASE I, BIFUNCTIONAL CATALASE-PEROXIDASE"/>
    <property type="match status" value="1"/>
</dbReference>
<dbReference type="Pfam" id="PF00141">
    <property type="entry name" value="peroxidase"/>
    <property type="match status" value="2"/>
</dbReference>
<dbReference type="PRINTS" id="PR00460">
    <property type="entry name" value="BPEROXIDASE"/>
</dbReference>
<dbReference type="PRINTS" id="PR00458">
    <property type="entry name" value="PEROXIDASE"/>
</dbReference>
<dbReference type="SUPFAM" id="SSF48113">
    <property type="entry name" value="Heme-dependent peroxidases"/>
    <property type="match status" value="2"/>
</dbReference>
<dbReference type="PROSITE" id="PS00435">
    <property type="entry name" value="PEROXIDASE_1"/>
    <property type="match status" value="1"/>
</dbReference>
<dbReference type="PROSITE" id="PS00436">
    <property type="entry name" value="PEROXIDASE_2"/>
    <property type="match status" value="1"/>
</dbReference>
<dbReference type="PROSITE" id="PS50873">
    <property type="entry name" value="PEROXIDASE_4"/>
    <property type="match status" value="1"/>
</dbReference>
<protein>
    <recommendedName>
        <fullName evidence="1">Catalase-peroxidase</fullName>
        <shortName evidence="1">CP</shortName>
        <ecNumber evidence="1">1.11.1.21</ecNumber>
    </recommendedName>
    <alternativeName>
        <fullName evidence="1">Peroxidase/catalase</fullName>
    </alternativeName>
</protein>
<reference key="1">
    <citation type="journal article" date="2006" name="BMC Genomics">
        <title>Complete genome sequence of Shigella flexneri 5b and comparison with Shigella flexneri 2a.</title>
        <authorList>
            <person name="Nie H."/>
            <person name="Yang F."/>
            <person name="Zhang X."/>
            <person name="Yang J."/>
            <person name="Chen L."/>
            <person name="Wang J."/>
            <person name="Xiong Z."/>
            <person name="Peng J."/>
            <person name="Sun L."/>
            <person name="Dong J."/>
            <person name="Xue Y."/>
            <person name="Xu X."/>
            <person name="Chen S."/>
            <person name="Yao Z."/>
            <person name="Shen Y."/>
            <person name="Jin Q."/>
        </authorList>
    </citation>
    <scope>NUCLEOTIDE SEQUENCE [LARGE SCALE GENOMIC DNA]</scope>
    <source>
        <strain>8401</strain>
    </source>
</reference>
<organism>
    <name type="scientific">Shigella flexneri serotype 5b (strain 8401)</name>
    <dbReference type="NCBI Taxonomy" id="373384"/>
    <lineage>
        <taxon>Bacteria</taxon>
        <taxon>Pseudomonadati</taxon>
        <taxon>Pseudomonadota</taxon>
        <taxon>Gammaproteobacteria</taxon>
        <taxon>Enterobacterales</taxon>
        <taxon>Enterobacteriaceae</taxon>
        <taxon>Shigella</taxon>
    </lineage>
</organism>
<comment type="function">
    <text evidence="1">Bifunctional enzyme with both catalase and broad-spectrum peroxidase activity.</text>
</comment>
<comment type="catalytic activity">
    <reaction evidence="1">
        <text>H2O2 + AH2 = A + 2 H2O</text>
        <dbReference type="Rhea" id="RHEA:30275"/>
        <dbReference type="ChEBI" id="CHEBI:13193"/>
        <dbReference type="ChEBI" id="CHEBI:15377"/>
        <dbReference type="ChEBI" id="CHEBI:16240"/>
        <dbReference type="ChEBI" id="CHEBI:17499"/>
        <dbReference type="EC" id="1.11.1.21"/>
    </reaction>
</comment>
<comment type="catalytic activity">
    <reaction evidence="1">
        <text>2 H2O2 = O2 + 2 H2O</text>
        <dbReference type="Rhea" id="RHEA:20309"/>
        <dbReference type="ChEBI" id="CHEBI:15377"/>
        <dbReference type="ChEBI" id="CHEBI:15379"/>
        <dbReference type="ChEBI" id="CHEBI:16240"/>
        <dbReference type="EC" id="1.11.1.21"/>
    </reaction>
</comment>
<comment type="cofactor">
    <cofactor evidence="1">
        <name>heme b</name>
        <dbReference type="ChEBI" id="CHEBI:60344"/>
    </cofactor>
    <text evidence="1">Binds 1 heme b (iron(II)-protoporphyrin IX) group per dimer.</text>
</comment>
<comment type="subunit">
    <text evidence="1">Homodimer or homotetramer.</text>
</comment>
<comment type="PTM">
    <text evidence="1">Formation of the three residue Trp-Tyr-Met cross-link is important for the catalase, but not the peroxidase activity of the enzyme.</text>
</comment>
<comment type="similarity">
    <text evidence="1">Belongs to the peroxidase family. Peroxidase/catalase subfamily.</text>
</comment>
<feature type="chain" id="PRO_0000354931" description="Catalase-peroxidase">
    <location>
        <begin position="1"/>
        <end position="726"/>
    </location>
</feature>
<feature type="region of interest" description="Disordered" evidence="2">
    <location>
        <begin position="1"/>
        <end position="33"/>
    </location>
</feature>
<feature type="active site" description="Proton acceptor" evidence="1">
    <location>
        <position position="106"/>
    </location>
</feature>
<feature type="binding site" description="axial binding residue" evidence="1">
    <location>
        <position position="267"/>
    </location>
    <ligand>
        <name>heme b</name>
        <dbReference type="ChEBI" id="CHEBI:60344"/>
    </ligand>
    <ligandPart>
        <name>Fe</name>
        <dbReference type="ChEBI" id="CHEBI:18248"/>
    </ligandPart>
</feature>
<feature type="site" description="Transition state stabilizer" evidence="1">
    <location>
        <position position="102"/>
    </location>
</feature>
<feature type="cross-link" description="Tryptophyl-tyrosyl-methioninium (Trp-Tyr) (with M-252)" evidence="1">
    <location>
        <begin position="105"/>
        <end position="226"/>
    </location>
</feature>
<feature type="cross-link" description="Tryptophyl-tyrosyl-methioninium (Tyr-Met) (with W-105)" evidence="1">
    <location>
        <begin position="226"/>
        <end position="252"/>
    </location>
</feature>
<gene>
    <name evidence="1" type="primary">katG</name>
    <name type="ordered locus">SFV_4012</name>
</gene>
<sequence length="726" mass="80040">MSTSDDIHNTTATGKCPFHQGGHDQSAGAGTTTRDWWPNQLRVDLLNQHSNRSNPLGEDFDYRKEFSKLDYYGLKKDLKALLTESQPWWPADWGSYAGLFIRMAWHGAGTYRSIDGRGGAGRGQQRFAPLNSWPDNVSLDKARRLLWPIKQKYGQKISWADLFILAGNVALENSGFRTFGFGAGREDVWEPDLDVNWGDEKAWLTHRHPEALAKAPLGATEMGLIYVNPEGPDHSGEPLSAAAAIRATFGNMGMNDEETVALIAGGHTLGKTHGAGPTSNVGPDPEAAPIEEQGLGWASTYGSGVGADAITSGLEVVWTQTPTQWSNYFFENLFKYEWVQTRSPAGAIQFEAVDAPEIIPDPFDPSKKRKPTMLVTDLTLRFDPEFEKISRRFLNDPQAFNEAFARAWFKLTHRDMGPKSRYIGPEVPKEDLIWQDPLPQPIYNPTEQDIIDLKFAIADSGLSVSELVSVAWASASTFRGGDKRGGANGARLALMPQRDWDVNAAAVRALPVLEKIQKESGKASLADIIVLAGVVGVEKAASAAGLSIHVPFAPGRVDARQDQTDIEMFELLEPIADGFRNYRARLDVSTTESLLIDKAQQLTLTAPEMTALVGGMRVLGANFDGSKNGVFTDRVGVLSNDFFVNLLDMRYEWKATDESKELFEGRDRETGEVKYTASRADLVFGSNSVLRAVAEVYASSDAHEKFVKDFVAAWVKVMNLDRFDLL</sequence>